<feature type="chain" id="PRO_0000066154" description="Uncharacterized protein in butB 5'region">
    <location>
        <begin position="1" status="less than"/>
        <end position="256"/>
    </location>
</feature>
<feature type="non-terminal residue">
    <location>
        <position position="1"/>
    </location>
</feature>
<comment type="similarity">
    <text evidence="1">To B.subtilis LplA.</text>
</comment>
<proteinExistence type="predicted"/>
<name>YBUB_NIACI</name>
<reference key="1">
    <citation type="journal article" date="1994" name="Gene">
        <title>Biosynthesis of butirosin in Bacillus circulans NRRL B3312: identification by sequence analysis and insertional mutagenesis of the butB gene involved in antibiotic production.</title>
        <authorList>
            <person name="Aubert-Pivert E."/>
            <person name="Davies J."/>
        </authorList>
    </citation>
    <scope>NUCLEOTIDE SEQUENCE [GENOMIC DNA]</scope>
    <source>
        <strain>BCRC 11491 / NRRL B-3312</strain>
    </source>
</reference>
<accession>P49324</accession>
<organism>
    <name type="scientific">Niallia circulans</name>
    <name type="common">Bacillus circulans</name>
    <dbReference type="NCBI Taxonomy" id="1397"/>
    <lineage>
        <taxon>Bacteria</taxon>
        <taxon>Bacillati</taxon>
        <taxon>Bacillota</taxon>
        <taxon>Bacilli</taxon>
        <taxon>Bacillales</taxon>
        <taxon>Bacillaceae</taxon>
        <taxon>Niallia</taxon>
    </lineage>
</organism>
<protein>
    <recommendedName>
        <fullName>Uncharacterized protein in butB 5'region</fullName>
    </recommendedName>
    <alternativeName>
        <fullName>ORFB</fullName>
    </alternativeName>
</protein>
<sequence>EFLTYMNKLYKEGLIDQEMPINTSAKAIEKFSSGKAAIFKQAYWNAGTTEKALKKNDPNAKTAIIPYLKDKSGKASTFVKANTTWFVTIPKVSKHKEDAVKFLDLKLKPDNFIEIAIGKQGEHHEIKDGKYYPILPKFNDELNNGSGFLTGVDYKKYPDYWQARVRKDPVLQAFFEEINKNAQGIMVTDPLAKAPPIADISKNKQKLDKFQTDSMLKFISGSDPLANYDQFLTKWKADGGEAMTKAANEWFKNAKK</sequence>
<dbReference type="EMBL" id="L20421">
    <property type="protein sequence ID" value="AAA62587.1"/>
    <property type="molecule type" value="Genomic_DNA"/>
</dbReference>
<dbReference type="PIR" id="T17880">
    <property type="entry name" value="T17880"/>
</dbReference>
<dbReference type="Gene3D" id="3.40.190.10">
    <property type="entry name" value="Periplasmic binding protein-like II"/>
    <property type="match status" value="1"/>
</dbReference>
<dbReference type="InterPro" id="IPR006059">
    <property type="entry name" value="SBP"/>
</dbReference>
<dbReference type="Pfam" id="PF01547">
    <property type="entry name" value="SBP_bac_1"/>
    <property type="match status" value="1"/>
</dbReference>
<dbReference type="SUPFAM" id="SSF53850">
    <property type="entry name" value="Periplasmic binding protein-like II"/>
    <property type="match status" value="1"/>
</dbReference>
<evidence type="ECO:0000305" key="1"/>